<gene>
    <name type="primary">OXA1</name>
</gene>
<dbReference type="EMBL" id="AF026395">
    <property type="protein sequence ID" value="AAB82601.1"/>
    <property type="molecule type" value="Genomic_DNA"/>
</dbReference>
<dbReference type="SMR" id="O13375"/>
<dbReference type="GO" id="GO:0005743">
    <property type="term" value="C:mitochondrial inner membrane"/>
    <property type="evidence" value="ECO:0007669"/>
    <property type="project" value="UniProtKB-SubCell"/>
</dbReference>
<dbReference type="GO" id="GO:0032977">
    <property type="term" value="F:membrane insertase activity"/>
    <property type="evidence" value="ECO:0007669"/>
    <property type="project" value="InterPro"/>
</dbReference>
<dbReference type="GO" id="GO:0032979">
    <property type="term" value="P:protein insertion into mitochondrial inner membrane from matrix"/>
    <property type="evidence" value="ECO:0007669"/>
    <property type="project" value="TreeGrafter"/>
</dbReference>
<dbReference type="CDD" id="cd20069">
    <property type="entry name" value="5TM_Oxa1-like"/>
    <property type="match status" value="1"/>
</dbReference>
<dbReference type="InterPro" id="IPR001708">
    <property type="entry name" value="YidC/ALB3/OXA1/COX18"/>
</dbReference>
<dbReference type="InterPro" id="IPR028055">
    <property type="entry name" value="YidC/Oxa/ALB_C"/>
</dbReference>
<dbReference type="PANTHER" id="PTHR12428:SF66">
    <property type="entry name" value="MITOCHONDRIAL INNER MEMBRANE PROTEIN OXA1L"/>
    <property type="match status" value="1"/>
</dbReference>
<dbReference type="PANTHER" id="PTHR12428">
    <property type="entry name" value="OXA1"/>
    <property type="match status" value="1"/>
</dbReference>
<dbReference type="Pfam" id="PF02096">
    <property type="entry name" value="60KD_IMP"/>
    <property type="match status" value="1"/>
</dbReference>
<organism>
    <name type="scientific">Monosporozyma servazzii</name>
    <name type="common">Yeast</name>
    <name type="synonym">Kazachstania servazzii</name>
    <dbReference type="NCBI Taxonomy" id="27293"/>
    <lineage>
        <taxon>Eukaryota</taxon>
        <taxon>Fungi</taxon>
        <taxon>Dikarya</taxon>
        <taxon>Ascomycota</taxon>
        <taxon>Saccharomycotina</taxon>
        <taxon>Saccharomycetes</taxon>
        <taxon>Saccharomycetales</taxon>
        <taxon>Saccharomycetaceae</taxon>
        <taxon>Monosporozyma</taxon>
    </lineage>
</organism>
<feature type="transit peptide" description="Mitochondrion" evidence="2">
    <location>
        <begin position="1"/>
        <end status="unknown"/>
    </location>
</feature>
<feature type="chain" id="PRO_0000020361" description="Mitochondrial inner membrane protein OXA1">
    <location>
        <begin status="unknown"/>
        <end position="371"/>
    </location>
</feature>
<feature type="transmembrane region" description="Helical" evidence="2">
    <location>
        <begin position="104"/>
        <end position="124"/>
    </location>
</feature>
<feature type="transmembrane region" description="Helical" evidence="2">
    <location>
        <begin position="255"/>
        <end position="275"/>
    </location>
</feature>
<protein>
    <recommendedName>
        <fullName>Mitochondrial inner membrane protein OXA1</fullName>
    </recommendedName>
    <alternativeName>
        <fullName>Cytochrome oxidase biogenesis protein OXA1</fullName>
    </alternativeName>
    <alternativeName>
        <fullName>Oxidase assembly protein 1</fullName>
    </alternativeName>
</protein>
<sequence>MGVANTSLRYSAFNFSLGRRFKSTSETLNDLPETISEVQTQLPSIDQMTNATADIVEQASHSVGELSTHIGYLNSIGLAQTWHWPADIIQHALEYVHVYTGLPWWGTICTVTILVRLLMFPIYVKSSDTIAKNSRIKPQMDKVTKELMATTDLAEGQKIAVRRRKLLSENGIKNRWLAAPMLQLPIAIGFFNALRSMANFPVDGFANQGILWFHDLTLSDPYLGLQFITAAVLMSFSRLGGETGAQQFSGPMKRFFIILPLVSIPATMNLSTSVVLYFAINGTFSVLQTLVLRNKWFRKKLNIAEVVQHPPDPTKENSGIFAAIKENMNTARERSEKRKLMKEEEERVHELIKKKRTNERIRIIRRPELKK</sequence>
<evidence type="ECO:0000250" key="1"/>
<evidence type="ECO:0000255" key="2"/>
<evidence type="ECO:0000305" key="3"/>
<proteinExistence type="inferred from homology"/>
<comment type="function">
    <text evidence="1">Probably required for the insertion of integral membrane proteins into the mitochondrial inner membrane. Essential for the activity and assembly of cytochrome c oxidase (By similarity).</text>
</comment>
<comment type="subcellular location">
    <subcellularLocation>
        <location evidence="1">Mitochondrion inner membrane</location>
        <topology evidence="1">Multi-pass membrane protein</topology>
    </subcellularLocation>
</comment>
<comment type="similarity">
    <text evidence="3">Belongs to the OXA1/ALB3/YidC family.</text>
</comment>
<name>OXA1_MONSE</name>
<reference key="1">
    <citation type="journal article" date="2000" name="Genetics">
        <title>Highly diverged homologs of Saccharomyces cerevisiae mitochondrial mRNA-specific translational activators have orthologous functions in other budding yeasts.</title>
        <authorList>
            <person name="Costanzo M.C."/>
            <person name="Bonnefoy N."/>
            <person name="Williams E.H."/>
            <person name="Clark-Walker G.D."/>
            <person name="Fox T.D."/>
        </authorList>
    </citation>
    <scope>NUCLEOTIDE SEQUENCE [GENOMIC DNA]</scope>
    <source>
        <strain>ATCC 58439 / CBS 4311 / JCM 5179 / BCRC 21501 / NBRC 1838 / NRRL Y-12661</strain>
    </source>
</reference>
<keyword id="KW-0472">Membrane</keyword>
<keyword id="KW-0496">Mitochondrion</keyword>
<keyword id="KW-0999">Mitochondrion inner membrane</keyword>
<keyword id="KW-0809">Transit peptide</keyword>
<keyword id="KW-0812">Transmembrane</keyword>
<keyword id="KW-1133">Transmembrane helix</keyword>
<accession>O13375</accession>